<gene>
    <name evidence="1" type="primary">hisB</name>
    <name type="ordered locus">Tpet_1711</name>
</gene>
<comment type="catalytic activity">
    <reaction evidence="1">
        <text>D-erythro-1-(imidazol-4-yl)glycerol 3-phosphate = 3-(imidazol-4-yl)-2-oxopropyl phosphate + H2O</text>
        <dbReference type="Rhea" id="RHEA:11040"/>
        <dbReference type="ChEBI" id="CHEBI:15377"/>
        <dbReference type="ChEBI" id="CHEBI:57766"/>
        <dbReference type="ChEBI" id="CHEBI:58278"/>
        <dbReference type="EC" id="4.2.1.19"/>
    </reaction>
</comment>
<comment type="pathway">
    <text evidence="1">Amino-acid biosynthesis; L-histidine biosynthesis; L-histidine from 5-phospho-alpha-D-ribose 1-diphosphate: step 6/9.</text>
</comment>
<comment type="subcellular location">
    <subcellularLocation>
        <location evidence="1">Cytoplasm</location>
    </subcellularLocation>
</comment>
<comment type="similarity">
    <text evidence="1">Belongs to the imidazoleglycerol-phosphate dehydratase family.</text>
</comment>
<feature type="chain" id="PRO_1000010367" description="Imidazoleglycerol-phosphate dehydratase">
    <location>
        <begin position="1"/>
        <end position="195"/>
    </location>
</feature>
<sequence length="195" mass="21995">MTVERLENGVIVQRNTNEIEISITLDTVHGKLEGSTGVNFFDHLLNTFCHYSGLGLRVSTCESKDGILHHLIEDFGISLGLAFRELFDYTKVRRFGEATVPMNEALVGCYVDLSGRPFFQKNFEFSVEKIEDMPVEGFEEFMCGFVNHARITVHFFKFFGKNDHHISESAMKSFGLAIARALEGSEKKTTKGVID</sequence>
<dbReference type="EC" id="4.2.1.19" evidence="1"/>
<dbReference type="EMBL" id="CP000702">
    <property type="protein sequence ID" value="ABQ47716.1"/>
    <property type="molecule type" value="Genomic_DNA"/>
</dbReference>
<dbReference type="RefSeq" id="WP_011944122.1">
    <property type="nucleotide sequence ID" value="NC_009486.1"/>
</dbReference>
<dbReference type="SMR" id="A5INE3"/>
<dbReference type="STRING" id="390874.Tpet_1711"/>
<dbReference type="KEGG" id="tpt:Tpet_1711"/>
<dbReference type="eggNOG" id="COG0131">
    <property type="taxonomic scope" value="Bacteria"/>
</dbReference>
<dbReference type="HOGENOM" id="CLU_044308_2_1_0"/>
<dbReference type="UniPathway" id="UPA00031">
    <property type="reaction ID" value="UER00011"/>
</dbReference>
<dbReference type="Proteomes" id="UP000006558">
    <property type="component" value="Chromosome"/>
</dbReference>
<dbReference type="GO" id="GO:0005737">
    <property type="term" value="C:cytoplasm"/>
    <property type="evidence" value="ECO:0007669"/>
    <property type="project" value="UniProtKB-SubCell"/>
</dbReference>
<dbReference type="GO" id="GO:0004424">
    <property type="term" value="F:imidazoleglycerol-phosphate dehydratase activity"/>
    <property type="evidence" value="ECO:0007669"/>
    <property type="project" value="UniProtKB-UniRule"/>
</dbReference>
<dbReference type="GO" id="GO:0000105">
    <property type="term" value="P:L-histidine biosynthetic process"/>
    <property type="evidence" value="ECO:0007669"/>
    <property type="project" value="UniProtKB-UniRule"/>
</dbReference>
<dbReference type="FunFam" id="3.30.230.40:FF:000008">
    <property type="entry name" value="Imidazoleglycerol-phosphate dehydratase"/>
    <property type="match status" value="1"/>
</dbReference>
<dbReference type="Gene3D" id="3.30.230.40">
    <property type="entry name" value="Imidazole glycerol phosphate dehydratase, domain 1"/>
    <property type="match status" value="2"/>
</dbReference>
<dbReference type="HAMAP" id="MF_00076">
    <property type="entry name" value="HisB"/>
    <property type="match status" value="1"/>
</dbReference>
<dbReference type="InterPro" id="IPR038494">
    <property type="entry name" value="IGPD_sf"/>
</dbReference>
<dbReference type="InterPro" id="IPR000807">
    <property type="entry name" value="ImidazoleglycerolP_deHydtase"/>
</dbReference>
<dbReference type="InterPro" id="IPR020565">
    <property type="entry name" value="ImidazoleglycerP_deHydtase_CS"/>
</dbReference>
<dbReference type="InterPro" id="IPR020568">
    <property type="entry name" value="Ribosomal_Su5_D2-typ_SF"/>
</dbReference>
<dbReference type="PANTHER" id="PTHR23133:SF2">
    <property type="entry name" value="IMIDAZOLEGLYCEROL-PHOSPHATE DEHYDRATASE"/>
    <property type="match status" value="1"/>
</dbReference>
<dbReference type="PANTHER" id="PTHR23133">
    <property type="entry name" value="IMIDAZOLEGLYCEROL-PHOSPHATE DEHYDRATASE HIS7"/>
    <property type="match status" value="1"/>
</dbReference>
<dbReference type="Pfam" id="PF00475">
    <property type="entry name" value="IGPD"/>
    <property type="match status" value="1"/>
</dbReference>
<dbReference type="SUPFAM" id="SSF54211">
    <property type="entry name" value="Ribosomal protein S5 domain 2-like"/>
    <property type="match status" value="2"/>
</dbReference>
<dbReference type="PROSITE" id="PS00955">
    <property type="entry name" value="IGP_DEHYDRATASE_2"/>
    <property type="match status" value="1"/>
</dbReference>
<organism>
    <name type="scientific">Thermotoga petrophila (strain ATCC BAA-488 / DSM 13995 / JCM 10881 / RKU-1)</name>
    <dbReference type="NCBI Taxonomy" id="390874"/>
    <lineage>
        <taxon>Bacteria</taxon>
        <taxon>Thermotogati</taxon>
        <taxon>Thermotogota</taxon>
        <taxon>Thermotogae</taxon>
        <taxon>Thermotogales</taxon>
        <taxon>Thermotogaceae</taxon>
        <taxon>Thermotoga</taxon>
    </lineage>
</organism>
<name>HIS7_THEP1</name>
<protein>
    <recommendedName>
        <fullName evidence="1">Imidazoleglycerol-phosphate dehydratase</fullName>
        <shortName evidence="1">IGPD</shortName>
        <ecNumber evidence="1">4.2.1.19</ecNumber>
    </recommendedName>
</protein>
<proteinExistence type="inferred from homology"/>
<keyword id="KW-0028">Amino-acid biosynthesis</keyword>
<keyword id="KW-0963">Cytoplasm</keyword>
<keyword id="KW-0368">Histidine biosynthesis</keyword>
<keyword id="KW-0456">Lyase</keyword>
<evidence type="ECO:0000255" key="1">
    <source>
        <dbReference type="HAMAP-Rule" id="MF_00076"/>
    </source>
</evidence>
<reference key="1">
    <citation type="submission" date="2007-05" db="EMBL/GenBank/DDBJ databases">
        <title>Complete sequence of Thermotoga petrophila RKU-1.</title>
        <authorList>
            <consortium name="US DOE Joint Genome Institute"/>
            <person name="Copeland A."/>
            <person name="Lucas S."/>
            <person name="Lapidus A."/>
            <person name="Barry K."/>
            <person name="Glavina del Rio T."/>
            <person name="Dalin E."/>
            <person name="Tice H."/>
            <person name="Pitluck S."/>
            <person name="Sims D."/>
            <person name="Brettin T."/>
            <person name="Bruce D."/>
            <person name="Detter J.C."/>
            <person name="Han C."/>
            <person name="Tapia R."/>
            <person name="Schmutz J."/>
            <person name="Larimer F."/>
            <person name="Land M."/>
            <person name="Hauser L."/>
            <person name="Kyrpides N."/>
            <person name="Mikhailova N."/>
            <person name="Nelson K."/>
            <person name="Gogarten J.P."/>
            <person name="Noll K."/>
            <person name="Richardson P."/>
        </authorList>
    </citation>
    <scope>NUCLEOTIDE SEQUENCE [LARGE SCALE GENOMIC DNA]</scope>
    <source>
        <strain>ATCC BAA-488 / DSM 13995 / JCM 10881 / RKU-1</strain>
    </source>
</reference>
<accession>A5INE3</accession>